<proteinExistence type="evidence at protein level"/>
<organism>
    <name type="scientific">Arabidopsis thaliana</name>
    <name type="common">Mouse-ear cress</name>
    <dbReference type="NCBI Taxonomy" id="3702"/>
    <lineage>
        <taxon>Eukaryota</taxon>
        <taxon>Viridiplantae</taxon>
        <taxon>Streptophyta</taxon>
        <taxon>Embryophyta</taxon>
        <taxon>Tracheophyta</taxon>
        <taxon>Spermatophyta</taxon>
        <taxon>Magnoliopsida</taxon>
        <taxon>eudicotyledons</taxon>
        <taxon>Gunneridae</taxon>
        <taxon>Pentapetalae</taxon>
        <taxon>rosids</taxon>
        <taxon>malvids</taxon>
        <taxon>Brassicales</taxon>
        <taxon>Brassicaceae</taxon>
        <taxon>Camelineae</taxon>
        <taxon>Arabidopsis</taxon>
    </lineage>
</organism>
<dbReference type="EC" id="3.4.22.-"/>
<dbReference type="EMBL" id="AY219834">
    <property type="protein sequence ID" value="AAP44522.1"/>
    <property type="molecule type" value="mRNA"/>
</dbReference>
<dbReference type="EMBL" id="AY322531">
    <property type="protein sequence ID" value="AAP84712.1"/>
    <property type="molecule type" value="mRNA"/>
</dbReference>
<dbReference type="EMBL" id="AL391716">
    <property type="protein sequence ID" value="CAC05502.1"/>
    <property type="molecule type" value="Genomic_DNA"/>
</dbReference>
<dbReference type="EMBL" id="CP002688">
    <property type="protein sequence ID" value="AED90710.1"/>
    <property type="molecule type" value="Genomic_DNA"/>
</dbReference>
<dbReference type="EMBL" id="AY063830">
    <property type="protein sequence ID" value="AAL36186.1"/>
    <property type="molecule type" value="mRNA"/>
</dbReference>
<dbReference type="EMBL" id="AY091308">
    <property type="protein sequence ID" value="AAM14247.1"/>
    <property type="molecule type" value="mRNA"/>
</dbReference>
<dbReference type="EMBL" id="AY086438">
    <property type="protein sequence ID" value="AAM63441.1"/>
    <property type="status" value="ALT_INIT"/>
    <property type="molecule type" value="mRNA"/>
</dbReference>
<dbReference type="RefSeq" id="NP_196040.1">
    <property type="nucleotide sequence ID" value="NM_120502.3"/>
</dbReference>
<dbReference type="PDB" id="8A53">
    <property type="method" value="X-ray"/>
    <property type="resolution" value="1.95 A"/>
    <property type="chains" value="A/B/C/D=1-325"/>
</dbReference>
<dbReference type="PDBsum" id="8A53"/>
<dbReference type="SMR" id="Q9FYE1"/>
<dbReference type="BioGRID" id="15579">
    <property type="interactions" value="74"/>
</dbReference>
<dbReference type="FunCoup" id="Q9FYE1">
    <property type="interactions" value="39"/>
</dbReference>
<dbReference type="STRING" id="3702.Q9FYE1"/>
<dbReference type="MEROPS" id="C14.034"/>
<dbReference type="GlyCosmos" id="Q9FYE1">
    <property type="glycosylation" value="1 site, No reported glycans"/>
</dbReference>
<dbReference type="GlyGen" id="Q9FYE1">
    <property type="glycosylation" value="1 site"/>
</dbReference>
<dbReference type="iPTMnet" id="Q9FYE1"/>
<dbReference type="PaxDb" id="3702-AT5G04200.1"/>
<dbReference type="ProteomicsDB" id="238317"/>
<dbReference type="DNASU" id="830299"/>
<dbReference type="EnsemblPlants" id="AT5G04200.1">
    <property type="protein sequence ID" value="AT5G04200.1"/>
    <property type="gene ID" value="AT5G04200"/>
</dbReference>
<dbReference type="GeneID" id="830299"/>
<dbReference type="Gramene" id="AT5G04200.1">
    <property type="protein sequence ID" value="AT5G04200.1"/>
    <property type="gene ID" value="AT5G04200"/>
</dbReference>
<dbReference type="KEGG" id="ath:AT5G04200"/>
<dbReference type="Araport" id="AT5G04200"/>
<dbReference type="TAIR" id="AT5G04200">
    <property type="gene designation" value="MC9"/>
</dbReference>
<dbReference type="eggNOG" id="KOG1546">
    <property type="taxonomic scope" value="Eukaryota"/>
</dbReference>
<dbReference type="HOGENOM" id="CLU_029389_4_1_1"/>
<dbReference type="InParanoid" id="Q9FYE1"/>
<dbReference type="OMA" id="FDSQHIE"/>
<dbReference type="OrthoDB" id="3223806at2759"/>
<dbReference type="PhylomeDB" id="Q9FYE1"/>
<dbReference type="PRO" id="PR:Q9FYE1"/>
<dbReference type="Proteomes" id="UP000006548">
    <property type="component" value="Chromosome 5"/>
</dbReference>
<dbReference type="ExpressionAtlas" id="Q9FYE1">
    <property type="expression patterns" value="baseline and differential"/>
</dbReference>
<dbReference type="GO" id="GO:0048046">
    <property type="term" value="C:apoplast"/>
    <property type="evidence" value="ECO:0000314"/>
    <property type="project" value="TAIR"/>
</dbReference>
<dbReference type="GO" id="GO:0004197">
    <property type="term" value="F:cysteine-type endopeptidase activity"/>
    <property type="evidence" value="ECO:0007669"/>
    <property type="project" value="InterPro"/>
</dbReference>
<dbReference type="GO" id="GO:0008234">
    <property type="term" value="F:cysteine-type peptidase activity"/>
    <property type="evidence" value="ECO:0000314"/>
    <property type="project" value="TAIR"/>
</dbReference>
<dbReference type="GO" id="GO:0006508">
    <property type="term" value="P:proteolysis"/>
    <property type="evidence" value="ECO:0007669"/>
    <property type="project" value="UniProtKB-KW"/>
</dbReference>
<dbReference type="FunFam" id="3.40.50.12660:FF:000013">
    <property type="match status" value="1"/>
</dbReference>
<dbReference type="Gene3D" id="3.40.50.12660">
    <property type="match status" value="2"/>
</dbReference>
<dbReference type="InterPro" id="IPR029030">
    <property type="entry name" value="Caspase-like_dom_sf"/>
</dbReference>
<dbReference type="InterPro" id="IPR050452">
    <property type="entry name" value="Metacaspase"/>
</dbReference>
<dbReference type="InterPro" id="IPR011600">
    <property type="entry name" value="Pept_C14_caspase"/>
</dbReference>
<dbReference type="PANTHER" id="PTHR48104">
    <property type="entry name" value="METACASPASE-4"/>
    <property type="match status" value="1"/>
</dbReference>
<dbReference type="PANTHER" id="PTHR48104:SF7">
    <property type="entry name" value="METACASPASE-9"/>
    <property type="match status" value="1"/>
</dbReference>
<dbReference type="Pfam" id="PF00656">
    <property type="entry name" value="Peptidase_C14"/>
    <property type="match status" value="1"/>
</dbReference>
<dbReference type="SUPFAM" id="SSF52129">
    <property type="entry name" value="Caspase-like"/>
    <property type="match status" value="1"/>
</dbReference>
<evidence type="ECO:0000250" key="1"/>
<evidence type="ECO:0000255" key="2"/>
<evidence type="ECO:0000269" key="3">
    <source>
    </source>
</evidence>
<evidence type="ECO:0000269" key="4">
    <source>
    </source>
</evidence>
<evidence type="ECO:0000269" key="5">
    <source>
    </source>
</evidence>
<evidence type="ECO:0000269" key="6">
    <source>
    </source>
</evidence>
<evidence type="ECO:0000269" key="7">
    <source>
    </source>
</evidence>
<evidence type="ECO:0000305" key="8"/>
<evidence type="ECO:0007829" key="9">
    <source>
        <dbReference type="PDB" id="8A53"/>
    </source>
</evidence>
<gene>
    <name type="primary">AMC9</name>
    <name type="synonym">MCP2F</name>
    <name type="ordered locus">At5g04200</name>
    <name type="ORF">F21E1.120</name>
</gene>
<keyword id="KW-0002">3D-structure</keyword>
<keyword id="KW-0052">Apoplast</keyword>
<keyword id="KW-0068">Autocatalytic cleavage</keyword>
<keyword id="KW-0903">Direct protein sequencing</keyword>
<keyword id="KW-0325">Glycoprotein</keyword>
<keyword id="KW-0378">Hydrolase</keyword>
<keyword id="KW-0645">Protease</keyword>
<keyword id="KW-1185">Reference proteome</keyword>
<keyword id="KW-0702">S-nitrosylation</keyword>
<keyword id="KW-0964">Secreted</keyword>
<keyword id="KW-0788">Thiol protease</keyword>
<protein>
    <recommendedName>
        <fullName>Metacaspase-9</fullName>
        <shortName>AtMC9</shortName>
        <ecNumber>3.4.22.-</ecNumber>
    </recommendedName>
    <component>
        <recommendedName>
            <fullName>Metacaspase-9 subunit p20</fullName>
        </recommendedName>
    </component>
    <component>
        <recommendedName>
            <fullName>Metacaspase-9 subunit p10</fullName>
        </recommendedName>
        <alternativeName>
            <fullName>Metacaspase 2f</fullName>
            <shortName>AtMCP2f</shortName>
        </alternativeName>
    </component>
</protein>
<accession>Q9FYE1</accession>
<accession>Q8LCR8</accession>
<name>MCA9_ARATH</name>
<comment type="function">
    <text evidence="7">Cysteine protease that cleaves specifically after arginine or lysine residues. Does not cleave caspase-specific substrates. Required for proteolytic processing of GRI (PubMed:25398910).</text>
</comment>
<comment type="activity regulation">
    <text evidence="4 5">Inhibited by serpin ZX and nitric oxide through cysteine nitrosylation.</text>
</comment>
<comment type="subcellular location">
    <subcellularLocation>
        <location evidence="4">Secreted</location>
        <location evidence="4">Extracellular space</location>
        <location evidence="4">Apoplast</location>
    </subcellularLocation>
</comment>
<comment type="tissue specificity">
    <text evidence="4 6">Expressed in root tips, cauline leaves, flowers and siliques.</text>
</comment>
<comment type="PTM">
    <text>The two subunits are derived from the precursor sequence by an autocatalytic mechanism.</text>
</comment>
<comment type="PTM">
    <text evidence="5">S-nitrosylation at Cys-147 suppresses both autoprocessing and proteolytic activity of the full-length protein, but does not affect the activity of the mature processed form.</text>
</comment>
<comment type="similarity">
    <text evidence="8">Belongs to the peptidase C14B family.</text>
</comment>
<comment type="sequence caution" evidence="8">
    <conflict type="erroneous initiation">
        <sequence resource="EMBL-CDS" id="AAM63441"/>
    </conflict>
    <text>Truncated N-terminus.</text>
</comment>
<feature type="chain" id="PRO_0000334607" description="Metacaspase-9">
    <location>
        <begin position="1"/>
        <end position="325"/>
    </location>
</feature>
<feature type="chain" id="PRO_0000334608" description="Metacaspase-9 subunit p20">
    <location>
        <begin position="1"/>
        <end position="183"/>
    </location>
</feature>
<feature type="chain" id="PRO_0000334609" description="Metacaspase-9 subunit p10">
    <location>
        <begin position="184"/>
        <end position="325"/>
    </location>
</feature>
<feature type="active site" evidence="1">
    <location>
        <position position="95"/>
    </location>
</feature>
<feature type="active site">
    <location>
        <position position="147"/>
    </location>
</feature>
<feature type="site" description="S-nitrosylation-insensitive cysteine; may replace the S-nitrosylated cysteine residue within the catalytic center (in mature processed form only)">
    <location>
        <position position="29"/>
    </location>
</feature>
<feature type="site" description="Cleavage; by autolysis">
    <location>
        <begin position="183"/>
        <end position="184"/>
    </location>
</feature>
<feature type="modified residue" description="S-nitrosocysteine" evidence="5">
    <location>
        <position position="147"/>
    </location>
</feature>
<feature type="glycosylation site" description="N-linked (GlcNAc...) asparagine" evidence="2">
    <location>
        <position position="177"/>
    </location>
</feature>
<feature type="mutagenesis site" description="Reduced proteolytic activity.">
    <original>C</original>
    <variation>A</variation>
    <location>
        <position position="29"/>
    </location>
</feature>
<feature type="mutagenesis site" description="Loss of autoprocessing and protease activity." evidence="3">
    <original>C</original>
    <variation>A</variation>
    <location>
        <position position="147"/>
    </location>
</feature>
<feature type="strand" evidence="9">
    <location>
        <begin position="10"/>
        <end position="16"/>
    </location>
</feature>
<feature type="helix" evidence="9">
    <location>
        <begin position="29"/>
        <end position="42"/>
    </location>
</feature>
<feature type="helix" evidence="9">
    <location>
        <begin position="48"/>
        <end position="50"/>
    </location>
</feature>
<feature type="strand" evidence="9">
    <location>
        <begin position="51"/>
        <end position="55"/>
    </location>
</feature>
<feature type="helix" evidence="9">
    <location>
        <begin position="66"/>
        <end position="79"/>
    </location>
</feature>
<feature type="strand" evidence="9">
    <location>
        <begin position="87"/>
        <end position="94"/>
    </location>
</feature>
<feature type="strand" evidence="9">
    <location>
        <begin position="96"/>
        <end position="99"/>
    </location>
</feature>
<feature type="strand" evidence="9">
    <location>
        <begin position="111"/>
        <end position="114"/>
    </location>
</feature>
<feature type="helix" evidence="9">
    <location>
        <begin position="124"/>
        <end position="131"/>
    </location>
</feature>
<feature type="strand" evidence="9">
    <location>
        <begin position="139"/>
        <end position="146"/>
    </location>
</feature>
<feature type="strand" evidence="9">
    <location>
        <begin position="158"/>
        <end position="161"/>
    </location>
</feature>
<feature type="turn" evidence="9">
    <location>
        <begin position="162"/>
        <end position="164"/>
    </location>
</feature>
<feature type="strand" evidence="9">
    <location>
        <begin position="178"/>
        <end position="182"/>
    </location>
</feature>
<feature type="helix" evidence="9">
    <location>
        <begin position="187"/>
        <end position="198"/>
    </location>
</feature>
<feature type="helix" evidence="9">
    <location>
        <begin position="205"/>
        <end position="213"/>
    </location>
</feature>
<feature type="helix" evidence="9">
    <location>
        <begin position="214"/>
        <end position="216"/>
    </location>
</feature>
<feature type="helix" evidence="9">
    <location>
        <begin position="219"/>
        <end position="222"/>
    </location>
</feature>
<feature type="helix" evidence="9">
    <location>
        <begin position="225"/>
        <end position="239"/>
    </location>
</feature>
<feature type="strand" evidence="9">
    <location>
        <begin position="245"/>
        <end position="251"/>
    </location>
</feature>
<feature type="strand" evidence="9">
    <location>
        <begin position="258"/>
        <end position="261"/>
    </location>
</feature>
<feature type="strand" evidence="9">
    <location>
        <begin position="263"/>
        <end position="265"/>
    </location>
</feature>
<feature type="helix" evidence="9">
    <location>
        <begin position="270"/>
        <end position="281"/>
    </location>
</feature>
<feature type="helix" evidence="9">
    <location>
        <begin position="288"/>
        <end position="301"/>
    </location>
</feature>
<feature type="strand" evidence="9">
    <location>
        <begin position="309"/>
        <end position="312"/>
    </location>
</feature>
<feature type="helix" evidence="9">
    <location>
        <begin position="314"/>
        <end position="317"/>
    </location>
</feature>
<feature type="strand" evidence="9">
    <location>
        <begin position="318"/>
        <end position="320"/>
    </location>
</feature>
<feature type="helix" evidence="9">
    <location>
        <begin position="321"/>
        <end position="323"/>
    </location>
</feature>
<sequence length="325" mass="35505">MDQQGMVKKRLAVLVGCNYPNTRNELHGCINDVLAMKETILSRFGFKQDDIEVLTDEPESKVKPTGANIKAALRRMVDKAQAGSGDILFFHYSGHGTRIPSVKSAHPFKQDEAIVPCDFNLITDVDFRELVNQLPKGTSFTMISDSCHSGGLIDKEKEQIGPSSVSSNISPAIETTNKTITSRALPFKAVLDHLSSLTGITTSDIGTHLLELFGRDAGLKFRLPAMDLMDLLETMTAREKHVDSGILMSGCQADETSADVGVGNGKAYGAFSNAIQRVLNENEGAMKNKQLVMMARDVLERLGFHQHPCLYCSDQNADATFLSQP</sequence>
<reference key="1">
    <citation type="journal article" date="2004" name="J. Biol. Chem.">
        <title>Type II metacaspases Atmc4 and Atmc9 of Arabidopsis thaliana cleave substrates after arginine and lysine.</title>
        <authorList>
            <person name="Vercammen D."/>
            <person name="van de Cotte B."/>
            <person name="De Jaeger G."/>
            <person name="Eeckhout D."/>
            <person name="Casteels P."/>
            <person name="Vandepoele K."/>
            <person name="Vandenberghe I."/>
            <person name="van Beeumen J."/>
            <person name="Inze D."/>
            <person name="van Breusegem F."/>
        </authorList>
    </citation>
    <scope>NUCLEOTIDE SEQUENCE [MRNA]</scope>
    <scope>PROTEIN SEQUENCE OF 184-190</scope>
    <scope>AUTOCATALYTIC CLEAVAGE</scope>
    <scope>GENE FAMILY</scope>
    <scope>NOMENCLATURE</scope>
    <scope>MUTAGENESIS OF CYS-147</scope>
</reference>
<reference key="2">
    <citation type="submission" date="2003-06" db="EMBL/GenBank/DDBJ databases">
        <title>Characterization of metacaspases.</title>
        <authorList>
            <person name="Ikeda Y."/>
            <person name="Krishnamurthy N."/>
            <person name="Chua N.-H."/>
        </authorList>
    </citation>
    <scope>NUCLEOTIDE SEQUENCE [MRNA]</scope>
</reference>
<reference key="3">
    <citation type="journal article" date="2000" name="Nature">
        <title>Sequence and analysis of chromosome 5 of the plant Arabidopsis thaliana.</title>
        <authorList>
            <person name="Tabata S."/>
            <person name="Kaneko T."/>
            <person name="Nakamura Y."/>
            <person name="Kotani H."/>
            <person name="Kato T."/>
            <person name="Asamizu E."/>
            <person name="Miyajima N."/>
            <person name="Sasamoto S."/>
            <person name="Kimura T."/>
            <person name="Hosouchi T."/>
            <person name="Kawashima K."/>
            <person name="Kohara M."/>
            <person name="Matsumoto M."/>
            <person name="Matsuno A."/>
            <person name="Muraki A."/>
            <person name="Nakayama S."/>
            <person name="Nakazaki N."/>
            <person name="Naruo K."/>
            <person name="Okumura S."/>
            <person name="Shinpo S."/>
            <person name="Takeuchi C."/>
            <person name="Wada T."/>
            <person name="Watanabe A."/>
            <person name="Yamada M."/>
            <person name="Yasuda M."/>
            <person name="Sato S."/>
            <person name="de la Bastide M."/>
            <person name="Huang E."/>
            <person name="Spiegel L."/>
            <person name="Gnoj L."/>
            <person name="O'Shaughnessy A."/>
            <person name="Preston R."/>
            <person name="Habermann K."/>
            <person name="Murray J."/>
            <person name="Johnson D."/>
            <person name="Rohlfing T."/>
            <person name="Nelson J."/>
            <person name="Stoneking T."/>
            <person name="Pepin K."/>
            <person name="Spieth J."/>
            <person name="Sekhon M."/>
            <person name="Armstrong J."/>
            <person name="Becker M."/>
            <person name="Belter E."/>
            <person name="Cordum H."/>
            <person name="Cordes M."/>
            <person name="Courtney L."/>
            <person name="Courtney W."/>
            <person name="Dante M."/>
            <person name="Du H."/>
            <person name="Edwards J."/>
            <person name="Fryman J."/>
            <person name="Haakensen B."/>
            <person name="Lamar E."/>
            <person name="Latreille P."/>
            <person name="Leonard S."/>
            <person name="Meyer R."/>
            <person name="Mulvaney E."/>
            <person name="Ozersky P."/>
            <person name="Riley A."/>
            <person name="Strowmatt C."/>
            <person name="Wagner-McPherson C."/>
            <person name="Wollam A."/>
            <person name="Yoakum M."/>
            <person name="Bell M."/>
            <person name="Dedhia N."/>
            <person name="Parnell L."/>
            <person name="Shah R."/>
            <person name="Rodriguez M."/>
            <person name="Hoon See L."/>
            <person name="Vil D."/>
            <person name="Baker J."/>
            <person name="Kirchoff K."/>
            <person name="Toth K."/>
            <person name="King L."/>
            <person name="Bahret A."/>
            <person name="Miller B."/>
            <person name="Marra M.A."/>
            <person name="Martienssen R."/>
            <person name="McCombie W.R."/>
            <person name="Wilson R.K."/>
            <person name="Murphy G."/>
            <person name="Bancroft I."/>
            <person name="Volckaert G."/>
            <person name="Wambutt R."/>
            <person name="Duesterhoeft A."/>
            <person name="Stiekema W."/>
            <person name="Pohl T."/>
            <person name="Entian K.-D."/>
            <person name="Terryn N."/>
            <person name="Hartley N."/>
            <person name="Bent E."/>
            <person name="Johnson S."/>
            <person name="Langham S.-A."/>
            <person name="McCullagh B."/>
            <person name="Robben J."/>
            <person name="Grymonprez B."/>
            <person name="Zimmermann W."/>
            <person name="Ramsperger U."/>
            <person name="Wedler H."/>
            <person name="Balke K."/>
            <person name="Wedler E."/>
            <person name="Peters S."/>
            <person name="van Staveren M."/>
            <person name="Dirkse W."/>
            <person name="Mooijman P."/>
            <person name="Klein Lankhorst R."/>
            <person name="Weitzenegger T."/>
            <person name="Bothe G."/>
            <person name="Rose M."/>
            <person name="Hauf J."/>
            <person name="Berneiser S."/>
            <person name="Hempel S."/>
            <person name="Feldpausch M."/>
            <person name="Lamberth S."/>
            <person name="Villarroel R."/>
            <person name="Gielen J."/>
            <person name="Ardiles W."/>
            <person name="Bents O."/>
            <person name="Lemcke K."/>
            <person name="Kolesov G."/>
            <person name="Mayer K.F.X."/>
            <person name="Rudd S."/>
            <person name="Schoof H."/>
            <person name="Schueller C."/>
            <person name="Zaccaria P."/>
            <person name="Mewes H.-W."/>
            <person name="Bevan M."/>
            <person name="Fransz P.F."/>
        </authorList>
    </citation>
    <scope>NUCLEOTIDE SEQUENCE [LARGE SCALE GENOMIC DNA]</scope>
    <source>
        <strain>cv. Columbia</strain>
    </source>
</reference>
<reference key="4">
    <citation type="journal article" date="2017" name="Plant J.">
        <title>Araport11: a complete reannotation of the Arabidopsis thaliana reference genome.</title>
        <authorList>
            <person name="Cheng C.Y."/>
            <person name="Krishnakumar V."/>
            <person name="Chan A.P."/>
            <person name="Thibaud-Nissen F."/>
            <person name="Schobel S."/>
            <person name="Town C.D."/>
        </authorList>
    </citation>
    <scope>GENOME REANNOTATION</scope>
    <source>
        <strain>cv. Columbia</strain>
    </source>
</reference>
<reference key="5">
    <citation type="journal article" date="2003" name="Science">
        <title>Empirical analysis of transcriptional activity in the Arabidopsis genome.</title>
        <authorList>
            <person name="Yamada K."/>
            <person name="Lim J."/>
            <person name="Dale J.M."/>
            <person name="Chen H."/>
            <person name="Shinn P."/>
            <person name="Palm C.J."/>
            <person name="Southwick A.M."/>
            <person name="Wu H.C."/>
            <person name="Kim C.J."/>
            <person name="Nguyen M."/>
            <person name="Pham P.K."/>
            <person name="Cheuk R.F."/>
            <person name="Karlin-Newmann G."/>
            <person name="Liu S.X."/>
            <person name="Lam B."/>
            <person name="Sakano H."/>
            <person name="Wu T."/>
            <person name="Yu G."/>
            <person name="Miranda M."/>
            <person name="Quach H.L."/>
            <person name="Tripp M."/>
            <person name="Chang C.H."/>
            <person name="Lee J.M."/>
            <person name="Toriumi M.J."/>
            <person name="Chan M.M."/>
            <person name="Tang C.C."/>
            <person name="Onodera C.S."/>
            <person name="Deng J.M."/>
            <person name="Akiyama K."/>
            <person name="Ansari Y."/>
            <person name="Arakawa T."/>
            <person name="Banh J."/>
            <person name="Banno F."/>
            <person name="Bowser L."/>
            <person name="Brooks S.Y."/>
            <person name="Carninci P."/>
            <person name="Chao Q."/>
            <person name="Choy N."/>
            <person name="Enju A."/>
            <person name="Goldsmith A.D."/>
            <person name="Gurjal M."/>
            <person name="Hansen N.F."/>
            <person name="Hayashizaki Y."/>
            <person name="Johnson-Hopson C."/>
            <person name="Hsuan V.W."/>
            <person name="Iida K."/>
            <person name="Karnes M."/>
            <person name="Khan S."/>
            <person name="Koesema E."/>
            <person name="Ishida J."/>
            <person name="Jiang P.X."/>
            <person name="Jones T."/>
            <person name="Kawai J."/>
            <person name="Kamiya A."/>
            <person name="Meyers C."/>
            <person name="Nakajima M."/>
            <person name="Narusaka M."/>
            <person name="Seki M."/>
            <person name="Sakurai T."/>
            <person name="Satou M."/>
            <person name="Tamse R."/>
            <person name="Vaysberg M."/>
            <person name="Wallender E.K."/>
            <person name="Wong C."/>
            <person name="Yamamura Y."/>
            <person name="Yuan S."/>
            <person name="Shinozaki K."/>
            <person name="Davis R.W."/>
            <person name="Theologis A."/>
            <person name="Ecker J.R."/>
        </authorList>
    </citation>
    <scope>NUCLEOTIDE SEQUENCE [LARGE SCALE MRNA]</scope>
    <source>
        <strain>cv. Columbia</strain>
    </source>
</reference>
<reference key="6">
    <citation type="submission" date="2002-03" db="EMBL/GenBank/DDBJ databases">
        <title>Full-length cDNA from Arabidopsis thaliana.</title>
        <authorList>
            <person name="Brover V.V."/>
            <person name="Troukhan M.E."/>
            <person name="Alexandrov N.A."/>
            <person name="Lu Y.-P."/>
            <person name="Flavell R.B."/>
            <person name="Feldmann K.A."/>
        </authorList>
    </citation>
    <scope>NUCLEOTIDE SEQUENCE [LARGE SCALE MRNA]</scope>
</reference>
<reference key="7">
    <citation type="journal article" date="2004" name="Mol. Plant Pathol.">
        <title>Recent advance in the study of caspase-like proteases and Bax inhibitor-1 in plants: their possible roles as regulator of programmed cell death.</title>
        <authorList>
            <person name="Watanabe N."/>
            <person name="Lam E."/>
        </authorList>
    </citation>
    <scope>GENE FAMILY</scope>
</reference>
<reference key="8">
    <citation type="journal article" date="2006" name="J. Mol. Biol.">
        <title>Serpin1 of Arabidopsis thaliana is a suicide inhibitor for metacaspase 9.</title>
        <authorList>
            <person name="Vercammen D."/>
            <person name="Belenghi B."/>
            <person name="van de Cotte B."/>
            <person name="Beunens T."/>
            <person name="Gavigan J.-A."/>
            <person name="De Rycke R."/>
            <person name="Brackenier A."/>
            <person name="Inze D."/>
            <person name="Harris J.L."/>
            <person name="van Breusegem F."/>
        </authorList>
    </citation>
    <scope>ACTIVITY REGULATION</scope>
    <scope>SUBCELLULAR LOCATION</scope>
    <scope>TISSUE SPECIFICITY</scope>
</reference>
<reference key="9">
    <citation type="journal article" date="2007" name="J. Biol. Chem.">
        <title>Metacaspase activity of Arabidopsis thaliana is regulated by S-nitrosylation of a critical cysteine residue.</title>
        <authorList>
            <person name="Belenghi B."/>
            <person name="Romero-Puertas M.C."/>
            <person name="Vercammen D."/>
            <person name="Brackenier A."/>
            <person name="Inze D."/>
            <person name="Delledonne M."/>
            <person name="van Breusegem F."/>
        </authorList>
    </citation>
    <scope>ACTIVITY REGULATION</scope>
    <scope>S-NITROSYLATION AT CYS-147</scope>
</reference>
<reference key="10">
    <citation type="journal article" date="2011" name="Plant J.">
        <title>Arabidopsis metacaspase 2d is a positive mediator of cell death induced during biotic and abiotic stresses.</title>
        <authorList>
            <person name="Watanabe N."/>
            <person name="Lam E."/>
        </authorList>
    </citation>
    <scope>TISSUE SPECIFICITY</scope>
</reference>
<reference key="11">
    <citation type="journal article" date="2015" name="EMBO J.">
        <title>GRIM REAPER peptide binds to receptor kinase PRK5 to trigger cell death in Arabidopsis.</title>
        <authorList>
            <person name="Wrzaczek M."/>
            <person name="Vainonen J.P."/>
            <person name="Stael S."/>
            <person name="Tsiatsiani L."/>
            <person name="Help-Rinta-Rahko H."/>
            <person name="Gauthier A."/>
            <person name="Kaufholdt D."/>
            <person name="Bollhoener B."/>
            <person name="Lamminmaeki A."/>
            <person name="Staes A."/>
            <person name="Gevaert K."/>
            <person name="Tuominen H."/>
            <person name="Van Breusegem F."/>
            <person name="Helariutta Y."/>
            <person name="Kangasjaervi J."/>
        </authorList>
    </citation>
    <scope>FUNCTION</scope>
</reference>